<gene>
    <name type="primary">ovca2</name>
    <name type="ORF">zgc:110011</name>
</gene>
<protein>
    <recommendedName>
        <fullName>Esterase OVCA2</fullName>
        <ecNumber evidence="2">3.1.1.1</ecNumber>
    </recommendedName>
    <alternativeName>
        <fullName>OVCA2 serine hydrolase domain-containing protein</fullName>
    </alternativeName>
    <alternativeName>
        <fullName>Ovarian cancer-associated gene 2 protein homolog</fullName>
    </alternativeName>
</protein>
<dbReference type="EC" id="3.1.1.1" evidence="2"/>
<dbReference type="EMBL" id="BC095129">
    <property type="protein sequence ID" value="AAH95129.1"/>
    <property type="molecule type" value="mRNA"/>
</dbReference>
<dbReference type="RefSeq" id="NP_001018391.1">
    <property type="nucleotide sequence ID" value="NM_001020555.1"/>
</dbReference>
<dbReference type="SMR" id="Q503Y4"/>
<dbReference type="FunCoup" id="Q503Y4">
    <property type="interactions" value="1715"/>
</dbReference>
<dbReference type="STRING" id="7955.ENSDARP00000133226"/>
<dbReference type="ESTHER" id="danre-OVCA2">
    <property type="family name" value="FSH1"/>
</dbReference>
<dbReference type="PaxDb" id="7955-ENSDARP00000051111"/>
<dbReference type="Ensembl" id="ENSDART00000167376">
    <property type="protein sequence ID" value="ENSDARP00000133226"/>
    <property type="gene ID" value="ENSDARG00000103748"/>
</dbReference>
<dbReference type="GeneID" id="553576"/>
<dbReference type="KEGG" id="dre:553576"/>
<dbReference type="AGR" id="ZFIN:ZDB-GENE-050522-115"/>
<dbReference type="CTD" id="124641"/>
<dbReference type="ZFIN" id="ZDB-GENE-050522-115">
    <property type="gene designation" value="ovca2"/>
</dbReference>
<dbReference type="eggNOG" id="KOG2551">
    <property type="taxonomic scope" value="Eukaryota"/>
</dbReference>
<dbReference type="HOGENOM" id="CLU_051938_2_3_1"/>
<dbReference type="InParanoid" id="Q503Y4"/>
<dbReference type="OMA" id="EEPRGWW"/>
<dbReference type="OrthoDB" id="414698at2759"/>
<dbReference type="PhylomeDB" id="Q503Y4"/>
<dbReference type="TreeFam" id="TF313006"/>
<dbReference type="PRO" id="PR:Q503Y4"/>
<dbReference type="Proteomes" id="UP000000437">
    <property type="component" value="Chromosome 10"/>
</dbReference>
<dbReference type="Bgee" id="ENSDARG00000103748">
    <property type="expression patterns" value="Expressed in ovary and 24 other cell types or tissues"/>
</dbReference>
<dbReference type="GO" id="GO:0005737">
    <property type="term" value="C:cytoplasm"/>
    <property type="evidence" value="ECO:0000318"/>
    <property type="project" value="GO_Central"/>
</dbReference>
<dbReference type="GO" id="GO:0005634">
    <property type="term" value="C:nucleus"/>
    <property type="evidence" value="ECO:0000318"/>
    <property type="project" value="GO_Central"/>
</dbReference>
<dbReference type="GO" id="GO:0016787">
    <property type="term" value="F:hydrolase activity"/>
    <property type="evidence" value="ECO:0000318"/>
    <property type="project" value="GO_Central"/>
</dbReference>
<dbReference type="FunFam" id="3.40.50.1820:FF:000073">
    <property type="entry name" value="esterase OVCA2 isoform X6"/>
    <property type="match status" value="1"/>
</dbReference>
<dbReference type="Gene3D" id="3.40.50.1820">
    <property type="entry name" value="alpha/beta hydrolase"/>
    <property type="match status" value="1"/>
</dbReference>
<dbReference type="InterPro" id="IPR029058">
    <property type="entry name" value="AB_hydrolase_fold"/>
</dbReference>
<dbReference type="InterPro" id="IPR005645">
    <property type="entry name" value="FSH-like_dom"/>
</dbReference>
<dbReference type="InterPro" id="IPR050593">
    <property type="entry name" value="LovG"/>
</dbReference>
<dbReference type="PANTHER" id="PTHR48070">
    <property type="entry name" value="ESTERASE OVCA2"/>
    <property type="match status" value="1"/>
</dbReference>
<dbReference type="PANTHER" id="PTHR48070:SF6">
    <property type="entry name" value="ESTERASE OVCA2"/>
    <property type="match status" value="1"/>
</dbReference>
<dbReference type="Pfam" id="PF03959">
    <property type="entry name" value="FSH1"/>
    <property type="match status" value="1"/>
</dbReference>
<dbReference type="SUPFAM" id="SSF53474">
    <property type="entry name" value="alpha/beta-Hydrolases"/>
    <property type="match status" value="1"/>
</dbReference>
<sequence length="227" mass="25277">MSAVPLRILCIHGYRQNGNSFREKTGALRKLLKKQVELVFISAPHQVPAIQEENCGTNQQSQTVSVGDEDQRGWWFSDVQARSFNAKQDCESSLGLEESIEAVKAALKDLGPFSGILGFSQGAALVAMLCALQEQKLEPDFNFRFAILVAGFRSACLEHQRFYEGPVITIPSLHVFGQDDRVIPEEMSRDLLPAFDGAQVLLHPGGHFVPAASSHRQTYQDFLKRFQ</sequence>
<proteinExistence type="evidence at transcript level"/>
<feature type="chain" id="PRO_0000300878" description="Esterase OVCA2">
    <location>
        <begin position="1"/>
        <end position="227"/>
    </location>
</feature>
<feature type="active site" description="Charge relay system" evidence="1">
    <location>
        <position position="120"/>
    </location>
</feature>
<feature type="active site" description="Charge relay system" evidence="1">
    <location>
        <position position="180"/>
    </location>
</feature>
<feature type="active site" description="Charge relay system" evidence="1">
    <location>
        <position position="207"/>
    </location>
</feature>
<keyword id="KW-0378">Hydrolase</keyword>
<keyword id="KW-1185">Reference proteome</keyword>
<keyword id="KW-0719">Serine esterase</keyword>
<comment type="function">
    <text evidence="2">Exhibits ester hydrolase activity with a strong preference for long-chain alkyl ester substrates and high selectivity against a variety of short, branched, and substituted esters. Is able to hydrolyze ester bonds within a wide range of p-nitrophenyl derivatives (C2-C14) in vitro, with a strong preference toward substrates of &gt;8 carbons.</text>
</comment>
<comment type="catalytic activity">
    <reaction evidence="2">
        <text>a carboxylic ester + H2O = an alcohol + a carboxylate + H(+)</text>
        <dbReference type="Rhea" id="RHEA:21164"/>
        <dbReference type="ChEBI" id="CHEBI:15377"/>
        <dbReference type="ChEBI" id="CHEBI:15378"/>
        <dbReference type="ChEBI" id="CHEBI:29067"/>
        <dbReference type="ChEBI" id="CHEBI:30879"/>
        <dbReference type="ChEBI" id="CHEBI:33308"/>
        <dbReference type="EC" id="3.1.1.1"/>
    </reaction>
</comment>
<comment type="similarity">
    <text evidence="3">Belongs to the LovG family.</text>
</comment>
<name>OVCA2_DANRE</name>
<organism>
    <name type="scientific">Danio rerio</name>
    <name type="common">Zebrafish</name>
    <name type="synonym">Brachydanio rerio</name>
    <dbReference type="NCBI Taxonomy" id="7955"/>
    <lineage>
        <taxon>Eukaryota</taxon>
        <taxon>Metazoa</taxon>
        <taxon>Chordata</taxon>
        <taxon>Craniata</taxon>
        <taxon>Vertebrata</taxon>
        <taxon>Euteleostomi</taxon>
        <taxon>Actinopterygii</taxon>
        <taxon>Neopterygii</taxon>
        <taxon>Teleostei</taxon>
        <taxon>Ostariophysi</taxon>
        <taxon>Cypriniformes</taxon>
        <taxon>Danionidae</taxon>
        <taxon>Danioninae</taxon>
        <taxon>Danio</taxon>
    </lineage>
</organism>
<reference key="1">
    <citation type="submission" date="2005-05" db="EMBL/GenBank/DDBJ databases">
        <authorList>
            <consortium name="NIH - Zebrafish Gene Collection (ZGC) project"/>
        </authorList>
    </citation>
    <scope>NUCLEOTIDE SEQUENCE [LARGE SCALE MRNA]</scope>
    <source>
        <tissue>Eye</tissue>
    </source>
</reference>
<evidence type="ECO:0000250" key="1">
    <source>
        <dbReference type="UniProtKB" id="P38777"/>
    </source>
</evidence>
<evidence type="ECO:0000250" key="2">
    <source>
        <dbReference type="UniProtKB" id="Q8WZ82"/>
    </source>
</evidence>
<evidence type="ECO:0000305" key="3"/>
<accession>Q503Y4</accession>